<sequence>MALNLRKNHQILKIINNALIDLPAPSNISTWWNFGSLLGICLITQIVTGLLLAMHYTADTNLAFSSVAHMCRDVQFGWLIRNLHANGASFFFICIYLHIGRGLYYGSYLNKETWNVGVILLLALMATAFVGYVLPWGQMSFWGATVITNLFSAIPYIGQTLVEWAWGGFSVDNPTLTRFFALHFLLPFVIVGLTLVHLTFLHETGSNNPLGIPSDCDKIPFHPYYTIKDILGFALMLSLLVSLALFSPNLLGDPENFTPANPLVTPPHIKPEWYFLFAYAILRSIPNKLGGVLALAASILVLFLTPLLHTSKLRSMTFRPLSQILFWTLVANVLILTWVGSQPVEHPFIIIGQLASLSYFTIILILFPLAAALENKLLKL</sequence>
<accession>Q9MED6</accession>
<comment type="function">
    <text evidence="2">Component of the ubiquinol-cytochrome c reductase complex (complex III or cytochrome b-c1 complex) that is part of the mitochondrial respiratory chain. The b-c1 complex mediates electron transfer from ubiquinol to cytochrome c. Contributes to the generation of a proton gradient across the mitochondrial membrane that is then used for ATP synthesis.</text>
</comment>
<comment type="cofactor">
    <cofactor evidence="2">
        <name>heme b</name>
        <dbReference type="ChEBI" id="CHEBI:60344"/>
    </cofactor>
    <text evidence="2">Binds 2 heme b groups non-covalently.</text>
</comment>
<comment type="subunit">
    <text evidence="2">The cytochrome bc1 complex contains 11 subunits: 3 respiratory subunits (MT-CYB, CYC1 and UQCRFS1), 2 core proteins (UQCRC1 and UQCRC2) and 6 low-molecular weight proteins (UQCRH/QCR6, UQCRB/QCR7, UQCRQ/QCR8, UQCR10/QCR9, UQCR11/QCR10 and a cleavage product of UQCRFS1). This cytochrome bc1 complex then forms a dimer.</text>
</comment>
<comment type="subcellular location">
    <subcellularLocation>
        <location evidence="2">Mitochondrion inner membrane</location>
        <topology evidence="2">Multi-pass membrane protein</topology>
    </subcellularLocation>
</comment>
<comment type="miscellaneous">
    <text evidence="1">Heme 1 (or BL or b562) is low-potential and absorbs at about 562 nm, and heme 2 (or BH or b566) is high-potential and absorbs at about 566 nm.</text>
</comment>
<comment type="similarity">
    <text evidence="3 4">Belongs to the cytochrome b family.</text>
</comment>
<comment type="caution">
    <text evidence="2">The full-length protein contains only eight transmembrane helices, not nine as predicted by bioinformatics tools.</text>
</comment>
<evidence type="ECO:0000250" key="1"/>
<evidence type="ECO:0000250" key="2">
    <source>
        <dbReference type="UniProtKB" id="P00157"/>
    </source>
</evidence>
<evidence type="ECO:0000255" key="3">
    <source>
        <dbReference type="PROSITE-ProRule" id="PRU00967"/>
    </source>
</evidence>
<evidence type="ECO:0000255" key="4">
    <source>
        <dbReference type="PROSITE-ProRule" id="PRU00968"/>
    </source>
</evidence>
<name>CYB_SETAM</name>
<geneLocation type="mitochondrion"/>
<keyword id="KW-0249">Electron transport</keyword>
<keyword id="KW-0349">Heme</keyword>
<keyword id="KW-0408">Iron</keyword>
<keyword id="KW-0472">Membrane</keyword>
<keyword id="KW-0479">Metal-binding</keyword>
<keyword id="KW-0496">Mitochondrion</keyword>
<keyword id="KW-0999">Mitochondrion inner membrane</keyword>
<keyword id="KW-0679">Respiratory chain</keyword>
<keyword id="KW-0812">Transmembrane</keyword>
<keyword id="KW-1133">Transmembrane helix</keyword>
<keyword id="KW-0813">Transport</keyword>
<keyword id="KW-0830">Ubiquinone</keyword>
<dbReference type="EMBL" id="AF256502">
    <property type="protein sequence ID" value="AAF71558.1"/>
    <property type="molecule type" value="Genomic_DNA"/>
</dbReference>
<dbReference type="EMBL" id="AF256503">
    <property type="protein sequence ID" value="AAF71559.1"/>
    <property type="molecule type" value="Genomic_DNA"/>
</dbReference>
<dbReference type="SMR" id="Q9MED6"/>
<dbReference type="GO" id="GO:0005743">
    <property type="term" value="C:mitochondrial inner membrane"/>
    <property type="evidence" value="ECO:0007669"/>
    <property type="project" value="UniProtKB-SubCell"/>
</dbReference>
<dbReference type="GO" id="GO:0045275">
    <property type="term" value="C:respiratory chain complex III"/>
    <property type="evidence" value="ECO:0007669"/>
    <property type="project" value="InterPro"/>
</dbReference>
<dbReference type="GO" id="GO:0046872">
    <property type="term" value="F:metal ion binding"/>
    <property type="evidence" value="ECO:0007669"/>
    <property type="project" value="UniProtKB-KW"/>
</dbReference>
<dbReference type="GO" id="GO:0008121">
    <property type="term" value="F:ubiquinol-cytochrome-c reductase activity"/>
    <property type="evidence" value="ECO:0007669"/>
    <property type="project" value="InterPro"/>
</dbReference>
<dbReference type="GO" id="GO:0006122">
    <property type="term" value="P:mitochondrial electron transport, ubiquinol to cytochrome c"/>
    <property type="evidence" value="ECO:0007669"/>
    <property type="project" value="TreeGrafter"/>
</dbReference>
<dbReference type="CDD" id="cd00290">
    <property type="entry name" value="cytochrome_b_C"/>
    <property type="match status" value="1"/>
</dbReference>
<dbReference type="CDD" id="cd00284">
    <property type="entry name" value="Cytochrome_b_N"/>
    <property type="match status" value="1"/>
</dbReference>
<dbReference type="FunFam" id="1.20.810.10:FF:000002">
    <property type="entry name" value="Cytochrome b"/>
    <property type="match status" value="1"/>
</dbReference>
<dbReference type="Gene3D" id="1.20.810.10">
    <property type="entry name" value="Cytochrome Bc1 Complex, Chain C"/>
    <property type="match status" value="1"/>
</dbReference>
<dbReference type="InterPro" id="IPR005798">
    <property type="entry name" value="Cyt_b/b6_C"/>
</dbReference>
<dbReference type="InterPro" id="IPR036150">
    <property type="entry name" value="Cyt_b/b6_C_sf"/>
</dbReference>
<dbReference type="InterPro" id="IPR005797">
    <property type="entry name" value="Cyt_b/b6_N"/>
</dbReference>
<dbReference type="InterPro" id="IPR027387">
    <property type="entry name" value="Cytb/b6-like_sf"/>
</dbReference>
<dbReference type="InterPro" id="IPR030689">
    <property type="entry name" value="Cytochrome_b"/>
</dbReference>
<dbReference type="InterPro" id="IPR048260">
    <property type="entry name" value="Cytochrome_b_C_euk/bac"/>
</dbReference>
<dbReference type="InterPro" id="IPR048259">
    <property type="entry name" value="Cytochrome_b_N_euk/bac"/>
</dbReference>
<dbReference type="InterPro" id="IPR016174">
    <property type="entry name" value="Di-haem_cyt_TM"/>
</dbReference>
<dbReference type="PANTHER" id="PTHR19271">
    <property type="entry name" value="CYTOCHROME B"/>
    <property type="match status" value="1"/>
</dbReference>
<dbReference type="PANTHER" id="PTHR19271:SF16">
    <property type="entry name" value="CYTOCHROME B"/>
    <property type="match status" value="1"/>
</dbReference>
<dbReference type="Pfam" id="PF00032">
    <property type="entry name" value="Cytochrom_B_C"/>
    <property type="match status" value="1"/>
</dbReference>
<dbReference type="Pfam" id="PF00033">
    <property type="entry name" value="Cytochrome_B"/>
    <property type="match status" value="1"/>
</dbReference>
<dbReference type="PIRSF" id="PIRSF038885">
    <property type="entry name" value="COB"/>
    <property type="match status" value="1"/>
</dbReference>
<dbReference type="SUPFAM" id="SSF81648">
    <property type="entry name" value="a domain/subunit of cytochrome bc1 complex (Ubiquinol-cytochrome c reductase)"/>
    <property type="match status" value="1"/>
</dbReference>
<dbReference type="SUPFAM" id="SSF81342">
    <property type="entry name" value="Transmembrane di-heme cytochromes"/>
    <property type="match status" value="1"/>
</dbReference>
<dbReference type="PROSITE" id="PS51003">
    <property type="entry name" value="CYTB_CTER"/>
    <property type="match status" value="1"/>
</dbReference>
<dbReference type="PROSITE" id="PS51002">
    <property type="entry name" value="CYTB_NTER"/>
    <property type="match status" value="1"/>
</dbReference>
<proteinExistence type="inferred from homology"/>
<gene>
    <name type="primary">MT-CYB</name>
    <name type="synonym">COB</name>
    <name type="synonym">CYTB</name>
    <name type="synonym">MTCYB</name>
</gene>
<reference key="1">
    <citation type="submission" date="2000-04" db="EMBL/GenBank/DDBJ databases">
        <title>A mitochondrial sequence-based phylogenetic analysis of Parula wood-warblers.</title>
        <authorList>
            <person name="Lovette I.J."/>
            <person name="Bermingham E."/>
        </authorList>
    </citation>
    <scope>NUCLEOTIDE SEQUENCE [GENOMIC DNA]</scope>
    <source>
        <strain>Isolate STRI JA-PAM1</strain>
        <strain>STRI JA-PAM2</strain>
    </source>
</reference>
<protein>
    <recommendedName>
        <fullName>Cytochrome b</fullName>
    </recommendedName>
    <alternativeName>
        <fullName>Complex III subunit 3</fullName>
    </alternativeName>
    <alternativeName>
        <fullName>Complex III subunit III</fullName>
    </alternativeName>
    <alternativeName>
        <fullName>Cytochrome b-c1 complex subunit 3</fullName>
    </alternativeName>
    <alternativeName>
        <fullName>Ubiquinol-cytochrome-c reductase complex cytochrome b subunit</fullName>
    </alternativeName>
</protein>
<organism>
    <name type="scientific">Setophaga americana</name>
    <name type="common">Northern parula</name>
    <name type="synonym">Parula americana</name>
    <dbReference type="NCBI Taxonomy" id="125947"/>
    <lineage>
        <taxon>Eukaryota</taxon>
        <taxon>Metazoa</taxon>
        <taxon>Chordata</taxon>
        <taxon>Craniata</taxon>
        <taxon>Vertebrata</taxon>
        <taxon>Euteleostomi</taxon>
        <taxon>Archelosauria</taxon>
        <taxon>Archosauria</taxon>
        <taxon>Dinosauria</taxon>
        <taxon>Saurischia</taxon>
        <taxon>Theropoda</taxon>
        <taxon>Coelurosauria</taxon>
        <taxon>Aves</taxon>
        <taxon>Neognathae</taxon>
        <taxon>Neoaves</taxon>
        <taxon>Telluraves</taxon>
        <taxon>Australaves</taxon>
        <taxon>Passeriformes</taxon>
        <taxon>Passeroidea</taxon>
        <taxon>Parulidae</taxon>
        <taxon>Setophaga</taxon>
    </lineage>
</organism>
<feature type="chain" id="PRO_0000061345" description="Cytochrome b">
    <location>
        <begin position="1"/>
        <end position="380"/>
    </location>
</feature>
<feature type="transmembrane region" description="Helical" evidence="2">
    <location>
        <begin position="34"/>
        <end position="54"/>
    </location>
</feature>
<feature type="transmembrane region" description="Helical" evidence="2">
    <location>
        <begin position="78"/>
        <end position="99"/>
    </location>
</feature>
<feature type="transmembrane region" description="Helical" evidence="2">
    <location>
        <begin position="114"/>
        <end position="134"/>
    </location>
</feature>
<feature type="transmembrane region" description="Helical" evidence="2">
    <location>
        <begin position="179"/>
        <end position="199"/>
    </location>
</feature>
<feature type="transmembrane region" description="Helical" evidence="2">
    <location>
        <begin position="227"/>
        <end position="247"/>
    </location>
</feature>
<feature type="transmembrane region" description="Helical" evidence="2">
    <location>
        <begin position="289"/>
        <end position="309"/>
    </location>
</feature>
<feature type="transmembrane region" description="Helical" evidence="2">
    <location>
        <begin position="321"/>
        <end position="341"/>
    </location>
</feature>
<feature type="transmembrane region" description="Helical" evidence="2">
    <location>
        <begin position="348"/>
        <end position="368"/>
    </location>
</feature>
<feature type="binding site" description="axial binding residue" evidence="2">
    <location>
        <position position="84"/>
    </location>
    <ligand>
        <name>heme b</name>
        <dbReference type="ChEBI" id="CHEBI:60344"/>
        <label>b562</label>
    </ligand>
    <ligandPart>
        <name>Fe</name>
        <dbReference type="ChEBI" id="CHEBI:18248"/>
    </ligandPart>
</feature>
<feature type="binding site" description="axial binding residue" evidence="2">
    <location>
        <position position="98"/>
    </location>
    <ligand>
        <name>heme b</name>
        <dbReference type="ChEBI" id="CHEBI:60344"/>
        <label>b566</label>
    </ligand>
    <ligandPart>
        <name>Fe</name>
        <dbReference type="ChEBI" id="CHEBI:18248"/>
    </ligandPart>
</feature>
<feature type="binding site" description="axial binding residue" evidence="2">
    <location>
        <position position="183"/>
    </location>
    <ligand>
        <name>heme b</name>
        <dbReference type="ChEBI" id="CHEBI:60344"/>
        <label>b562</label>
    </ligand>
    <ligandPart>
        <name>Fe</name>
        <dbReference type="ChEBI" id="CHEBI:18248"/>
    </ligandPart>
</feature>
<feature type="binding site" description="axial binding residue" evidence="2">
    <location>
        <position position="197"/>
    </location>
    <ligand>
        <name>heme b</name>
        <dbReference type="ChEBI" id="CHEBI:60344"/>
        <label>b566</label>
    </ligand>
    <ligandPart>
        <name>Fe</name>
        <dbReference type="ChEBI" id="CHEBI:18248"/>
    </ligandPart>
</feature>
<feature type="binding site" evidence="2">
    <location>
        <position position="202"/>
    </location>
    <ligand>
        <name>a ubiquinone</name>
        <dbReference type="ChEBI" id="CHEBI:16389"/>
    </ligand>
</feature>